<gene>
    <name evidence="1" type="primary">rdgC</name>
    <name type="ordered locus">SG0637</name>
</gene>
<evidence type="ECO:0000255" key="1">
    <source>
        <dbReference type="HAMAP-Rule" id="MF_00194"/>
    </source>
</evidence>
<protein>
    <recommendedName>
        <fullName evidence="1">Recombination-associated protein RdgC</fullName>
    </recommendedName>
</protein>
<comment type="function">
    <text evidence="1">May be involved in recombination.</text>
</comment>
<comment type="subcellular location">
    <subcellularLocation>
        <location evidence="1">Cytoplasm</location>
        <location evidence="1">Nucleoid</location>
    </subcellularLocation>
</comment>
<comment type="similarity">
    <text evidence="1">Belongs to the RdgC family.</text>
</comment>
<proteinExistence type="inferred from homology"/>
<accession>Q2NVB3</accession>
<organism>
    <name type="scientific">Sodalis glossinidius (strain morsitans)</name>
    <dbReference type="NCBI Taxonomy" id="343509"/>
    <lineage>
        <taxon>Bacteria</taxon>
        <taxon>Pseudomonadati</taxon>
        <taxon>Pseudomonadota</taxon>
        <taxon>Gammaproteobacteria</taxon>
        <taxon>Enterobacterales</taxon>
        <taxon>Bruguierivoracaceae</taxon>
        <taxon>Sodalis</taxon>
    </lineage>
</organism>
<keyword id="KW-0963">Cytoplasm</keyword>
<keyword id="KW-0233">DNA recombination</keyword>
<name>RDGC_SODGM</name>
<sequence length="305" mass="34041">MLWFKNVMIYRLNRPIELSVEQIEQQLSAFAFTPCGSQDMAKSGWVPPMGAKSDALTHSIPGHVLLCLRKEEKILPSSVVKQELEGKISKLENDQSRKLRKTDKDALKDELLHQLMPRAFSRFGQTLLWLDLANDLVLVDAGSARKAEDCLAMLRKSIGSLPVVPLTMEKPIEMTLTEWVRSGEPAAGFAIQDEAELKVLLEEGGILRCKKQDLSSDEIAVHIEAGKLVTKLALDWRERVQFLLGDDGTVKRLKFSDTLREQNDDIDREDFAARFDADFLLMTGELTGLIAELIAGLGGEAPRQG</sequence>
<dbReference type="EMBL" id="AP008232">
    <property type="protein sequence ID" value="BAE73912.1"/>
    <property type="molecule type" value="Genomic_DNA"/>
</dbReference>
<dbReference type="RefSeq" id="WP_011410390.1">
    <property type="nucleotide sequence ID" value="NC_007712.1"/>
</dbReference>
<dbReference type="SMR" id="Q2NVB3"/>
<dbReference type="STRING" id="343509.SG0637"/>
<dbReference type="KEGG" id="sgl:SG0637"/>
<dbReference type="eggNOG" id="COG2974">
    <property type="taxonomic scope" value="Bacteria"/>
</dbReference>
<dbReference type="HOGENOM" id="CLU_052038_1_1_6"/>
<dbReference type="OrthoDB" id="5290530at2"/>
<dbReference type="BioCyc" id="SGLO343509:SGP1_RS05540-MONOMER"/>
<dbReference type="Proteomes" id="UP000001932">
    <property type="component" value="Chromosome"/>
</dbReference>
<dbReference type="GO" id="GO:0043590">
    <property type="term" value="C:bacterial nucleoid"/>
    <property type="evidence" value="ECO:0007669"/>
    <property type="project" value="TreeGrafter"/>
</dbReference>
<dbReference type="GO" id="GO:0005737">
    <property type="term" value="C:cytoplasm"/>
    <property type="evidence" value="ECO:0007669"/>
    <property type="project" value="UniProtKB-UniRule"/>
</dbReference>
<dbReference type="GO" id="GO:0003690">
    <property type="term" value="F:double-stranded DNA binding"/>
    <property type="evidence" value="ECO:0007669"/>
    <property type="project" value="TreeGrafter"/>
</dbReference>
<dbReference type="GO" id="GO:0006310">
    <property type="term" value="P:DNA recombination"/>
    <property type="evidence" value="ECO:0007669"/>
    <property type="project" value="UniProtKB-UniRule"/>
</dbReference>
<dbReference type="GO" id="GO:0000018">
    <property type="term" value="P:regulation of DNA recombination"/>
    <property type="evidence" value="ECO:0007669"/>
    <property type="project" value="TreeGrafter"/>
</dbReference>
<dbReference type="HAMAP" id="MF_00194">
    <property type="entry name" value="RdgC"/>
    <property type="match status" value="1"/>
</dbReference>
<dbReference type="InterPro" id="IPR007476">
    <property type="entry name" value="RdgC"/>
</dbReference>
<dbReference type="NCBIfam" id="NF001460">
    <property type="entry name" value="PRK00321.1-1"/>
    <property type="match status" value="1"/>
</dbReference>
<dbReference type="NCBIfam" id="NF001462">
    <property type="entry name" value="PRK00321.1-3"/>
    <property type="match status" value="1"/>
</dbReference>
<dbReference type="NCBIfam" id="NF001464">
    <property type="entry name" value="PRK00321.1-5"/>
    <property type="match status" value="1"/>
</dbReference>
<dbReference type="PANTHER" id="PTHR38103">
    <property type="entry name" value="RECOMBINATION-ASSOCIATED PROTEIN RDGC"/>
    <property type="match status" value="1"/>
</dbReference>
<dbReference type="PANTHER" id="PTHR38103:SF1">
    <property type="entry name" value="RECOMBINATION-ASSOCIATED PROTEIN RDGC"/>
    <property type="match status" value="1"/>
</dbReference>
<dbReference type="Pfam" id="PF04381">
    <property type="entry name" value="RdgC"/>
    <property type="match status" value="1"/>
</dbReference>
<reference key="1">
    <citation type="journal article" date="2006" name="Genome Res.">
        <title>Massive genome erosion and functional adaptations provide insights into the symbiotic lifestyle of Sodalis glossinidius in the tsetse host.</title>
        <authorList>
            <person name="Toh H."/>
            <person name="Weiss B.L."/>
            <person name="Perkin S.A.H."/>
            <person name="Yamashita A."/>
            <person name="Oshima K."/>
            <person name="Hattori M."/>
            <person name="Aksoy S."/>
        </authorList>
    </citation>
    <scope>NUCLEOTIDE SEQUENCE [LARGE SCALE GENOMIC DNA]</scope>
    <source>
        <strain>morsitans</strain>
    </source>
</reference>
<feature type="chain" id="PRO_1000021242" description="Recombination-associated protein RdgC">
    <location>
        <begin position="1"/>
        <end position="305"/>
    </location>
</feature>